<sequence length="796" mass="90930">MKHKLDVTINELRLKSIRKIVKRINTWSDEVKSYSDDALKQKTIEFKERLASGVDTLDTLLPEAYAVAREASWRVLGMYPKEVQLIGAIVLHEGNIAEMQTGEGKTLTATMPLYLNALSGKGTYLITTNDYLAKRDFEEMQPLYEWLGLTASLGFVDIVDYEYQKGEKRNIYEHDIIYTTNGRLGFDYLIDNLADSAEGKFLPQLNYGIIDEVDSIILDAAQTPLVISGAPRLQSNLFHIVKEFVDTLIEDVHFKMKKTKKEIWLLNQGIEAAQSYFNVEDLYSEQAMVLVRNINLALRAQYLFESNVDYFVYNGDIVLIDRITGRMLPGTKLQAGLHQAIEAKEGMEVSTDKSVMATITFQNLFKLFESFSGMTATGKLGESEFFDLYSKIVVQVPTDKAIQRIDEPDKVFRSVDEKNIAMIHDIVELHETGRPVLLITRTAEAAEYFSKVLFQMDIPNNLLIAQNVAKEAQMIAEAGQIGSMTVATSMAGRGTDIKLGEGVEALGGLAVIIHEHMENSRVDRQLRGRSGRQGDPGSSCIYISLDDYLVKRWSDSNLAENNQLYSLDAQRLSQSNLFNRKVKQIVVKAQRISEEQGVKAREMANEFEKSISIQRDLVYEERNRVLEIDDAENQDFKALAKDVFEMFVNEEKVLTKSRVVEYIYQNLSFQFNKDVACVNFKDKQAVVTFLLEQFEKQLALNRKNMQSAYYYNIFVQKVFLKAIDSCWLEQVDYLQQLKASVNQRQNGQRNAIFEYHRVALDSFEVMTRNIKKRMVKNICQSMITFDKEGMPVIHFP</sequence>
<protein>
    <recommendedName>
        <fullName evidence="1">Protein translocase subunit SecA 2</fullName>
        <ecNumber evidence="1">7.4.2.8</ecNumber>
    </recommendedName>
</protein>
<organism>
    <name type="scientific">Staphylococcus aureus (strain NCTC 8325 / PS 47)</name>
    <dbReference type="NCBI Taxonomy" id="93061"/>
    <lineage>
        <taxon>Bacteria</taxon>
        <taxon>Bacillati</taxon>
        <taxon>Bacillota</taxon>
        <taxon>Bacilli</taxon>
        <taxon>Bacillales</taxon>
        <taxon>Staphylococcaceae</taxon>
        <taxon>Staphylococcus</taxon>
    </lineage>
</organism>
<evidence type="ECO:0000255" key="1">
    <source>
        <dbReference type="HAMAP-Rule" id="MF_01382"/>
    </source>
</evidence>
<evidence type="ECO:0000269" key="2">
    <source>
    </source>
</evidence>
<evidence type="ECO:0000305" key="3"/>
<accession>Q2FUW6</accession>
<dbReference type="EC" id="7.4.2.8" evidence="1"/>
<dbReference type="EMBL" id="CP000253">
    <property type="protein sequence ID" value="ABD31972.1"/>
    <property type="molecule type" value="Genomic_DNA"/>
</dbReference>
<dbReference type="RefSeq" id="WP_000680947.1">
    <property type="nucleotide sequence ID" value="NZ_LS483365.1"/>
</dbReference>
<dbReference type="RefSeq" id="YP_501434.1">
    <property type="nucleotide sequence ID" value="NC_007795.1"/>
</dbReference>
<dbReference type="SMR" id="Q2FUW6"/>
<dbReference type="STRING" id="93061.SAOUHSC_02985"/>
<dbReference type="BindingDB" id="Q2FUW6"/>
<dbReference type="ChEMBL" id="CHEMBL3832955"/>
<dbReference type="DrugCentral" id="Q2FUW6"/>
<dbReference type="PaxDb" id="1280-SAXN108_2920"/>
<dbReference type="GeneID" id="3921467"/>
<dbReference type="KEGG" id="sao:SAOUHSC_02985"/>
<dbReference type="PATRIC" id="fig|93061.5.peg.2692"/>
<dbReference type="eggNOG" id="COG0653">
    <property type="taxonomic scope" value="Bacteria"/>
</dbReference>
<dbReference type="HOGENOM" id="CLU_005314_3_2_9"/>
<dbReference type="OrthoDB" id="9762243at2"/>
<dbReference type="PRO" id="PR:Q2FUW6"/>
<dbReference type="Proteomes" id="UP000008816">
    <property type="component" value="Chromosome"/>
</dbReference>
<dbReference type="GO" id="GO:0031522">
    <property type="term" value="C:cell envelope Sec protein transport complex"/>
    <property type="evidence" value="ECO:0000318"/>
    <property type="project" value="GO_Central"/>
</dbReference>
<dbReference type="GO" id="GO:0005737">
    <property type="term" value="C:cytoplasm"/>
    <property type="evidence" value="ECO:0007669"/>
    <property type="project" value="UniProtKB-SubCell"/>
</dbReference>
<dbReference type="GO" id="GO:0005886">
    <property type="term" value="C:plasma membrane"/>
    <property type="evidence" value="ECO:0000318"/>
    <property type="project" value="GO_Central"/>
</dbReference>
<dbReference type="GO" id="GO:0005524">
    <property type="term" value="F:ATP binding"/>
    <property type="evidence" value="ECO:0000318"/>
    <property type="project" value="GO_Central"/>
</dbReference>
<dbReference type="GO" id="GO:0008564">
    <property type="term" value="F:protein-exporting ATPase activity"/>
    <property type="evidence" value="ECO:0007669"/>
    <property type="project" value="UniProtKB-EC"/>
</dbReference>
<dbReference type="GO" id="GO:0065002">
    <property type="term" value="P:intracellular protein transmembrane transport"/>
    <property type="evidence" value="ECO:0007669"/>
    <property type="project" value="UniProtKB-UniRule"/>
</dbReference>
<dbReference type="GO" id="GO:0017038">
    <property type="term" value="P:protein import"/>
    <property type="evidence" value="ECO:0007669"/>
    <property type="project" value="InterPro"/>
</dbReference>
<dbReference type="GO" id="GO:0006605">
    <property type="term" value="P:protein targeting"/>
    <property type="evidence" value="ECO:0007669"/>
    <property type="project" value="UniProtKB-UniRule"/>
</dbReference>
<dbReference type="GO" id="GO:0043952">
    <property type="term" value="P:protein transport by the Sec complex"/>
    <property type="evidence" value="ECO:0000318"/>
    <property type="project" value="GO_Central"/>
</dbReference>
<dbReference type="CDD" id="cd17928">
    <property type="entry name" value="DEXDc_SecA"/>
    <property type="match status" value="1"/>
</dbReference>
<dbReference type="CDD" id="cd18803">
    <property type="entry name" value="SF2_C_secA"/>
    <property type="match status" value="1"/>
</dbReference>
<dbReference type="FunFam" id="3.40.50.300:FF:000429">
    <property type="entry name" value="Preprotein translocase subunit SecA"/>
    <property type="match status" value="1"/>
</dbReference>
<dbReference type="FunFam" id="3.40.50.300:FF:001575">
    <property type="entry name" value="Protein translocase subunit SecA 2"/>
    <property type="match status" value="1"/>
</dbReference>
<dbReference type="Gene3D" id="1.10.3060.10">
    <property type="entry name" value="Helical scaffold and wing domains of SecA"/>
    <property type="match status" value="1"/>
</dbReference>
<dbReference type="Gene3D" id="3.40.50.300">
    <property type="entry name" value="P-loop containing nucleotide triphosphate hydrolases"/>
    <property type="match status" value="2"/>
</dbReference>
<dbReference type="Gene3D" id="3.90.1440.10">
    <property type="entry name" value="SecA, preprotein cross-linking domain"/>
    <property type="match status" value="1"/>
</dbReference>
<dbReference type="HAMAP" id="MF_01382">
    <property type="entry name" value="SecA"/>
    <property type="match status" value="1"/>
</dbReference>
<dbReference type="InterPro" id="IPR014001">
    <property type="entry name" value="Helicase_ATP-bd"/>
</dbReference>
<dbReference type="InterPro" id="IPR001650">
    <property type="entry name" value="Helicase_C-like"/>
</dbReference>
<dbReference type="InterPro" id="IPR027417">
    <property type="entry name" value="P-loop_NTPase"/>
</dbReference>
<dbReference type="InterPro" id="IPR000185">
    <property type="entry name" value="SecA"/>
</dbReference>
<dbReference type="InterPro" id="IPR022490">
    <property type="entry name" value="SecA2"/>
</dbReference>
<dbReference type="InterPro" id="IPR011115">
    <property type="entry name" value="SecA_DEAD"/>
</dbReference>
<dbReference type="InterPro" id="IPR014018">
    <property type="entry name" value="SecA_motor_DEAD"/>
</dbReference>
<dbReference type="InterPro" id="IPR011130">
    <property type="entry name" value="SecA_preprotein_X-link_dom"/>
</dbReference>
<dbReference type="InterPro" id="IPR044722">
    <property type="entry name" value="SecA_SF2_C"/>
</dbReference>
<dbReference type="InterPro" id="IPR011116">
    <property type="entry name" value="SecA_Wing/Scaffold"/>
</dbReference>
<dbReference type="InterPro" id="IPR036266">
    <property type="entry name" value="SecA_Wing/Scaffold_sf"/>
</dbReference>
<dbReference type="InterPro" id="IPR036670">
    <property type="entry name" value="SecA_X-link_sf"/>
</dbReference>
<dbReference type="NCBIfam" id="NF006630">
    <property type="entry name" value="PRK09200.1"/>
    <property type="match status" value="1"/>
</dbReference>
<dbReference type="NCBIfam" id="TIGR03714">
    <property type="entry name" value="secA2"/>
    <property type="match status" value="1"/>
</dbReference>
<dbReference type="PANTHER" id="PTHR30612:SF0">
    <property type="entry name" value="CHLOROPLAST PROTEIN-TRANSPORTING ATPASE"/>
    <property type="match status" value="1"/>
</dbReference>
<dbReference type="PANTHER" id="PTHR30612">
    <property type="entry name" value="SECA INNER MEMBRANE COMPONENT OF SEC PROTEIN SECRETION SYSTEM"/>
    <property type="match status" value="1"/>
</dbReference>
<dbReference type="Pfam" id="PF21090">
    <property type="entry name" value="P-loop_SecA"/>
    <property type="match status" value="1"/>
</dbReference>
<dbReference type="Pfam" id="PF07517">
    <property type="entry name" value="SecA_DEAD"/>
    <property type="match status" value="1"/>
</dbReference>
<dbReference type="Pfam" id="PF01043">
    <property type="entry name" value="SecA_PP_bind"/>
    <property type="match status" value="1"/>
</dbReference>
<dbReference type="Pfam" id="PF07516">
    <property type="entry name" value="SecA_SW"/>
    <property type="match status" value="1"/>
</dbReference>
<dbReference type="PRINTS" id="PR00906">
    <property type="entry name" value="SECA"/>
</dbReference>
<dbReference type="SMART" id="SM00957">
    <property type="entry name" value="SecA_DEAD"/>
    <property type="match status" value="1"/>
</dbReference>
<dbReference type="SMART" id="SM00958">
    <property type="entry name" value="SecA_PP_bind"/>
    <property type="match status" value="1"/>
</dbReference>
<dbReference type="SUPFAM" id="SSF81886">
    <property type="entry name" value="Helical scaffold and wing domains of SecA"/>
    <property type="match status" value="1"/>
</dbReference>
<dbReference type="SUPFAM" id="SSF52540">
    <property type="entry name" value="P-loop containing nucleoside triphosphate hydrolases"/>
    <property type="match status" value="2"/>
</dbReference>
<dbReference type="SUPFAM" id="SSF81767">
    <property type="entry name" value="Pre-protein crosslinking domain of SecA"/>
    <property type="match status" value="1"/>
</dbReference>
<dbReference type="PROSITE" id="PS51196">
    <property type="entry name" value="SECA_MOTOR_DEAD"/>
    <property type="match status" value="1"/>
</dbReference>
<gene>
    <name evidence="1" type="primary">secA2</name>
    <name type="ordered locus">SAOUHSC_02985</name>
</gene>
<name>SECA2_STAA8</name>
<reference key="1">
    <citation type="book" date="2006" name="Gram positive pathogens, 2nd edition">
        <title>The Staphylococcus aureus NCTC 8325 genome.</title>
        <editorList>
            <person name="Fischetti V."/>
            <person name="Novick R."/>
            <person name="Ferretti J."/>
            <person name="Portnoy D."/>
            <person name="Rood J."/>
        </editorList>
        <authorList>
            <person name="Gillaspy A.F."/>
            <person name="Worrell V."/>
            <person name="Orvis J."/>
            <person name="Roe B.A."/>
            <person name="Dyer D.W."/>
            <person name="Iandolo J.J."/>
        </authorList>
    </citation>
    <scope>NUCLEOTIDE SEQUENCE [LARGE SCALE GENOMIC DNA]</scope>
    <source>
        <strain>NCTC 8325 / PS 47</strain>
    </source>
</reference>
<reference key="2">
    <citation type="journal article" date="2008" name="J. Bacteriol.">
        <title>Characterization of the accessory Sec system of Staphylococcus aureus.</title>
        <authorList>
            <person name="Siboo I.R."/>
            <person name="Chaffin D.O."/>
            <person name="Rubens C.E."/>
            <person name="Sullam P.M."/>
        </authorList>
    </citation>
    <scope>FUNCTION</scope>
    <scope>DISRUPTION PHENOTYPE</scope>
    <source>
        <strain>ISP479C</strain>
    </source>
</reference>
<feature type="chain" id="PRO_0000318430" description="Protein translocase subunit SecA 2">
    <location>
        <begin position="1"/>
        <end position="796"/>
    </location>
</feature>
<feature type="binding site" evidence="1">
    <location>
        <position position="84"/>
    </location>
    <ligand>
        <name>ATP</name>
        <dbReference type="ChEBI" id="CHEBI:30616"/>
    </ligand>
</feature>
<feature type="binding site" evidence="1">
    <location>
        <begin position="102"/>
        <end position="106"/>
    </location>
    <ligand>
        <name>ATP</name>
        <dbReference type="ChEBI" id="CHEBI:30616"/>
    </ligand>
</feature>
<feature type="binding site" evidence="1">
    <location>
        <position position="496"/>
    </location>
    <ligand>
        <name>ATP</name>
        <dbReference type="ChEBI" id="CHEBI:30616"/>
    </ligand>
</feature>
<keyword id="KW-0067">ATP-binding</keyword>
<keyword id="KW-1003">Cell membrane</keyword>
<keyword id="KW-0963">Cytoplasm</keyword>
<keyword id="KW-0472">Membrane</keyword>
<keyword id="KW-0547">Nucleotide-binding</keyword>
<keyword id="KW-0653">Protein transport</keyword>
<keyword id="KW-1185">Reference proteome</keyword>
<keyword id="KW-1278">Translocase</keyword>
<keyword id="KW-0811">Translocation</keyword>
<keyword id="KW-0813">Transport</keyword>
<comment type="function">
    <text evidence="2">Part of the accessory SecA2/SecY2 system specifically required to export SraP, a serine-rich repeat cell wall protein encoded upstream in the same operon.</text>
</comment>
<comment type="catalytic activity">
    <reaction evidence="1">
        <text>ATP + H2O + cellular proteinSide 1 = ADP + phosphate + cellular proteinSide 2.</text>
        <dbReference type="EC" id="7.4.2.8"/>
    </reaction>
</comment>
<comment type="subunit">
    <text evidence="3">Monomer and homodimer (Potential). Part of the accessory SecA2/SecY2 protein translocation apparatus required to export cell wall protein SraP.</text>
</comment>
<comment type="subcellular location">
    <subcellularLocation>
        <location evidence="1">Cell membrane</location>
        <topology evidence="1">Peripheral membrane protein</topology>
        <orientation evidence="1">Cytoplasmic side</orientation>
    </subcellularLocation>
    <subcellularLocation>
        <location evidence="1">Cytoplasm</location>
    </subcellularLocation>
    <text evidence="1">Distribution is 50-50.</text>
</comment>
<comment type="disruption phenotype">
    <text evidence="2">No effect on cell growth, significantly reduces export of the cell wall protein SrpA. The small amount that is exported seems to be glycosylated normally.</text>
</comment>
<comment type="similarity">
    <text evidence="1">Belongs to the SecA family.</text>
</comment>
<proteinExistence type="inferred from homology"/>